<name>ICAM1_PANPA</name>
<comment type="function">
    <text evidence="1">ICAM proteins are ligands for the leukocyte adhesion protein LFA-1 (integrin alpha-L/beta-2). During leukocyte trans-endothelial migration, ICAM1 engagement promotes the assembly of endothelial apical cups through ARHGEF26/SGEF and RHOG activation (By similarity).</text>
</comment>
<comment type="subunit">
    <text evidence="2">Homodimer. Interacts with MUC1 and promotes cell aggregation in epithelial cells. Interacts with ARHGEF26/SGEF. Interacts (on T cell side) with CD81, CD247 and CD9 at immunological synapses between antigen-presenting cells and T cells.</text>
</comment>
<comment type="subcellular location">
    <subcellularLocation>
        <location evidence="1">Membrane</location>
        <topology evidence="1">Single-pass type I membrane protein</topology>
    </subcellularLocation>
</comment>
<comment type="PTM">
    <text evidence="1">Monoubiquitinated, which is promoted by MARCH9 and leads to endocytosis.</text>
</comment>
<comment type="similarity">
    <text evidence="5">Belongs to the immunoglobulin superfamily. ICAM family.</text>
</comment>
<evidence type="ECO:0000250" key="1"/>
<evidence type="ECO:0000250" key="2">
    <source>
        <dbReference type="UniProtKB" id="P05362"/>
    </source>
</evidence>
<evidence type="ECO:0000255" key="3"/>
<evidence type="ECO:0000255" key="4">
    <source>
        <dbReference type="PROSITE-ProRule" id="PRU00114"/>
    </source>
</evidence>
<evidence type="ECO:0000305" key="5"/>
<feature type="signal peptide" evidence="1">
    <location>
        <begin position="1"/>
        <end position="27"/>
    </location>
</feature>
<feature type="chain" id="PRO_0000014786" description="Intercellular adhesion molecule 1">
    <location>
        <begin position="28"/>
        <end position="532"/>
    </location>
</feature>
<feature type="topological domain" description="Extracellular" evidence="3">
    <location>
        <begin position="28"/>
        <end position="480"/>
    </location>
</feature>
<feature type="transmembrane region" description="Helical" evidence="3">
    <location>
        <begin position="481"/>
        <end position="503"/>
    </location>
</feature>
<feature type="topological domain" description="Cytoplasmic" evidence="3">
    <location>
        <begin position="504"/>
        <end position="532"/>
    </location>
</feature>
<feature type="domain" description="Ig-like C2-type 1">
    <location>
        <begin position="41"/>
        <end position="103"/>
    </location>
</feature>
<feature type="domain" description="Ig-like C2-type 2">
    <location>
        <begin position="128"/>
        <end position="193"/>
    </location>
</feature>
<feature type="domain" description="Ig-like C2-type 3">
    <location>
        <begin position="230"/>
        <end position="297"/>
    </location>
</feature>
<feature type="domain" description="Ig-like C2-type 4">
    <location>
        <begin position="325"/>
        <end position="378"/>
    </location>
</feature>
<feature type="domain" description="Ig-like C2-type 5">
    <location>
        <begin position="412"/>
        <end position="464"/>
    </location>
</feature>
<feature type="short sequence motif" description="Cell attachment site; atypical" evidence="3">
    <location>
        <begin position="152"/>
        <end position="154"/>
    </location>
</feature>
<feature type="modified residue" description="Phosphothreonine" evidence="2">
    <location>
        <position position="521"/>
    </location>
</feature>
<feature type="modified residue" description="Phosphothreonine" evidence="2">
    <location>
        <position position="530"/>
    </location>
</feature>
<feature type="glycosylation site" description="N-linked (GlcNAc...) asparagine" evidence="3">
    <location>
        <position position="145"/>
    </location>
</feature>
<feature type="glycosylation site" description="N-linked (GlcNAc...) asparagine" evidence="3">
    <location>
        <position position="183"/>
    </location>
</feature>
<feature type="glycosylation site" description="N-linked (GlcNAc...) asparagine" evidence="3">
    <location>
        <position position="202"/>
    </location>
</feature>
<feature type="glycosylation site" description="N-linked (GlcNAc...) asparagine" evidence="3">
    <location>
        <position position="267"/>
    </location>
</feature>
<feature type="glycosylation site" description="N-linked (GlcNAc...) asparagine" evidence="3">
    <location>
        <position position="296"/>
    </location>
</feature>
<feature type="glycosylation site" description="N-linked (GlcNAc...) asparagine" evidence="3">
    <location>
        <position position="385"/>
    </location>
</feature>
<feature type="glycosylation site" description="N-linked (GlcNAc...) asparagine" evidence="3">
    <location>
        <position position="406"/>
    </location>
</feature>
<feature type="disulfide bond" evidence="4">
    <location>
        <begin position="48"/>
        <end position="92"/>
    </location>
</feature>
<feature type="disulfide bond" evidence="4">
    <location>
        <begin position="52"/>
        <end position="96"/>
    </location>
</feature>
<feature type="disulfide bond" evidence="4">
    <location>
        <begin position="135"/>
        <end position="186"/>
    </location>
</feature>
<feature type="disulfide bond" evidence="4">
    <location>
        <begin position="237"/>
        <end position="290"/>
    </location>
</feature>
<feature type="disulfide bond" evidence="4">
    <location>
        <begin position="332"/>
        <end position="371"/>
    </location>
</feature>
<feature type="disulfide bond" evidence="2">
    <location>
        <begin position="403"/>
        <end position="419"/>
    </location>
</feature>
<feature type="disulfide bond" evidence="4">
    <location>
        <begin position="419"/>
        <end position="457"/>
    </location>
</feature>
<feature type="disulfide bond" evidence="2">
    <location>
        <begin position="431"/>
        <end position="457"/>
    </location>
</feature>
<organism>
    <name type="scientific">Pan paniscus</name>
    <name type="common">Pygmy chimpanzee</name>
    <name type="synonym">Bonobo</name>
    <dbReference type="NCBI Taxonomy" id="9597"/>
    <lineage>
        <taxon>Eukaryota</taxon>
        <taxon>Metazoa</taxon>
        <taxon>Chordata</taxon>
        <taxon>Craniata</taxon>
        <taxon>Vertebrata</taxon>
        <taxon>Euteleostomi</taxon>
        <taxon>Mammalia</taxon>
        <taxon>Eutheria</taxon>
        <taxon>Euarchontoglires</taxon>
        <taxon>Primates</taxon>
        <taxon>Haplorrhini</taxon>
        <taxon>Catarrhini</taxon>
        <taxon>Hominidae</taxon>
        <taxon>Pan</taxon>
    </lineage>
</organism>
<dbReference type="EMBL" id="AF340048">
    <property type="protein sequence ID" value="AAQ14905.1"/>
    <property type="molecule type" value="Genomic_DNA"/>
</dbReference>
<dbReference type="EMBL" id="AF340042">
    <property type="protein sequence ID" value="AAQ14905.1"/>
    <property type="status" value="JOINED"/>
    <property type="molecule type" value="Genomic_DNA"/>
</dbReference>
<dbReference type="EMBL" id="AF340043">
    <property type="protein sequence ID" value="AAQ14905.1"/>
    <property type="status" value="JOINED"/>
    <property type="molecule type" value="Genomic_DNA"/>
</dbReference>
<dbReference type="EMBL" id="AF340044">
    <property type="protein sequence ID" value="AAQ14905.1"/>
    <property type="status" value="JOINED"/>
    <property type="molecule type" value="Genomic_DNA"/>
</dbReference>
<dbReference type="EMBL" id="AF340045">
    <property type="protein sequence ID" value="AAQ14905.1"/>
    <property type="status" value="JOINED"/>
    <property type="molecule type" value="Genomic_DNA"/>
</dbReference>
<dbReference type="EMBL" id="AF340046">
    <property type="protein sequence ID" value="AAQ14905.1"/>
    <property type="status" value="JOINED"/>
    <property type="molecule type" value="Genomic_DNA"/>
</dbReference>
<dbReference type="EMBL" id="AF340047">
    <property type="protein sequence ID" value="AAQ14905.1"/>
    <property type="status" value="JOINED"/>
    <property type="molecule type" value="Genomic_DNA"/>
</dbReference>
<dbReference type="RefSeq" id="XP_003809639.1">
    <property type="nucleotide sequence ID" value="XM_003809591.6"/>
</dbReference>
<dbReference type="SMR" id="Q5NKV4"/>
<dbReference type="STRING" id="9597.ENSPPAP00000022084"/>
<dbReference type="GlyCosmos" id="Q5NKV4">
    <property type="glycosylation" value="7 sites, No reported glycans"/>
</dbReference>
<dbReference type="Ensembl" id="ENSPPAT00000044874.1">
    <property type="protein sequence ID" value="ENSPPAP00000022067.1"/>
    <property type="gene ID" value="ENSPPAG00000034232.1"/>
</dbReference>
<dbReference type="GeneID" id="100980120"/>
<dbReference type="KEGG" id="pps:100980120"/>
<dbReference type="CTD" id="3383"/>
<dbReference type="eggNOG" id="ENOG502S45R">
    <property type="taxonomic scope" value="Eukaryota"/>
</dbReference>
<dbReference type="GeneTree" id="ENSGT00940000162311"/>
<dbReference type="OMA" id="NLTVYWF"/>
<dbReference type="OrthoDB" id="10881at9604"/>
<dbReference type="Proteomes" id="UP000240080">
    <property type="component" value="Chromosome 19"/>
</dbReference>
<dbReference type="Bgee" id="ENSPPAG00000034232">
    <property type="expression patterns" value="Expressed in placenta and 6 other cell types or tissues"/>
</dbReference>
<dbReference type="GO" id="GO:0005886">
    <property type="term" value="C:plasma membrane"/>
    <property type="evidence" value="ECO:0007669"/>
    <property type="project" value="TreeGrafter"/>
</dbReference>
<dbReference type="GO" id="GO:0005178">
    <property type="term" value="F:integrin binding"/>
    <property type="evidence" value="ECO:0007669"/>
    <property type="project" value="InterPro"/>
</dbReference>
<dbReference type="GO" id="GO:0098609">
    <property type="term" value="P:cell-cell adhesion"/>
    <property type="evidence" value="ECO:0007669"/>
    <property type="project" value="InterPro"/>
</dbReference>
<dbReference type="CDD" id="cd20996">
    <property type="entry name" value="IgI_N_ICAM-1"/>
    <property type="match status" value="1"/>
</dbReference>
<dbReference type="FunFam" id="2.60.40.10:FF:000194">
    <property type="entry name" value="Intercellular adhesion molecule 1"/>
    <property type="match status" value="1"/>
</dbReference>
<dbReference type="FunFam" id="2.60.40.10:FF:000459">
    <property type="entry name" value="Intercellular adhesion molecule 1"/>
    <property type="match status" value="1"/>
</dbReference>
<dbReference type="FunFam" id="2.60.40.10:FF:000641">
    <property type="entry name" value="Intercellular adhesion molecule 1"/>
    <property type="match status" value="1"/>
</dbReference>
<dbReference type="FunFam" id="2.60.40.10:FF:000648">
    <property type="entry name" value="Intercellular adhesion molecule 1"/>
    <property type="match status" value="1"/>
</dbReference>
<dbReference type="FunFam" id="2.60.40.10:FF:000338">
    <property type="entry name" value="intercellular adhesion molecule 5"/>
    <property type="match status" value="1"/>
</dbReference>
<dbReference type="Gene3D" id="2.60.40.10">
    <property type="entry name" value="Immunoglobulins"/>
    <property type="match status" value="5"/>
</dbReference>
<dbReference type="InterPro" id="IPR003988">
    <property type="entry name" value="ICAM"/>
</dbReference>
<dbReference type="InterPro" id="IPR048679">
    <property type="entry name" value="ICAM1_3_5_D2"/>
</dbReference>
<dbReference type="InterPro" id="IPR013768">
    <property type="entry name" value="ICAM_N"/>
</dbReference>
<dbReference type="InterPro" id="IPR047012">
    <property type="entry name" value="ICAM_VCAM"/>
</dbReference>
<dbReference type="InterPro" id="IPR003987">
    <property type="entry name" value="ICAM_VCAM_N"/>
</dbReference>
<dbReference type="InterPro" id="IPR007110">
    <property type="entry name" value="Ig-like_dom"/>
</dbReference>
<dbReference type="InterPro" id="IPR036179">
    <property type="entry name" value="Ig-like_dom_sf"/>
</dbReference>
<dbReference type="InterPro" id="IPR013783">
    <property type="entry name" value="Ig-like_fold"/>
</dbReference>
<dbReference type="InterPro" id="IPR003599">
    <property type="entry name" value="Ig_sub"/>
</dbReference>
<dbReference type="PANTHER" id="PTHR13771">
    <property type="entry name" value="INTERCELLULAR ADHESION MOLECULE"/>
    <property type="match status" value="1"/>
</dbReference>
<dbReference type="PANTHER" id="PTHR13771:SF18">
    <property type="entry name" value="INTERCELLULAR ADHESION MOLECULE 1"/>
    <property type="match status" value="1"/>
</dbReference>
<dbReference type="Pfam" id="PF21146">
    <property type="entry name" value="ICAM1_3_5_D2"/>
    <property type="match status" value="1"/>
</dbReference>
<dbReference type="Pfam" id="PF03921">
    <property type="entry name" value="ICAM_N"/>
    <property type="match status" value="1"/>
</dbReference>
<dbReference type="PRINTS" id="PR01473">
    <property type="entry name" value="ICAM"/>
</dbReference>
<dbReference type="PRINTS" id="PR01472">
    <property type="entry name" value="ICAMVCAM1"/>
</dbReference>
<dbReference type="SMART" id="SM00409">
    <property type="entry name" value="IG"/>
    <property type="match status" value="3"/>
</dbReference>
<dbReference type="SUPFAM" id="SSF48726">
    <property type="entry name" value="Immunoglobulin"/>
    <property type="match status" value="5"/>
</dbReference>
<dbReference type="PROSITE" id="PS50835">
    <property type="entry name" value="IG_LIKE"/>
    <property type="match status" value="1"/>
</dbReference>
<sequence>MAPSSPRPALPALLVLLGALFPGPGNAQTSVSPPKVILPRGGSVQVTCSTSCDQPDLLGIETPLPKKELLLGGNNWKVYELSNVQEDSQPMCYSNCPDGQSTAKTFLTVYWTPERVELAPLPSWQPVGKDLTLRCQVEGGAPRANLTVVLLRGEKELKREPAVGEPAEVTTTVLVERDHHGANFSCRTELDLRPQGLQLFENTSAPHQLQTFVLPATPPQLVSPRVLEVDTQGTVVCSLDGLFPVLEAQVHLALGDQRLNPTVTYGNDSFSAKASVSVTAEDEGTQRLMCAVILGNQSRETLQTVTIYSFPAPNVILTKPEVSEGTEVTVKCEAHPRAKVTLNGVPAQPVGPRVQLLLKATPEDNGRSFSCSATLEVAGQLIHKNQTRELRVLYGPRLDERDCPGNWTWPENSQQTPMCQASGNPLPELKCLKDGTFPLPVGESVTVTRDLEGTYLCRARSTQGEVTRKVTVNVLSPRYEIVIITVVAAAVIMGTAGLSTYLYNRQRKIRKYRLQQAQKGTPMKPNTQATPP</sequence>
<reference key="1">
    <citation type="submission" date="2001-01" db="EMBL/GenBank/DDBJ databases">
        <title>The chimpanzee ICAM proteins have been positively selected.</title>
        <authorList>
            <person name="Messier W."/>
            <person name="Walter N.A.R."/>
            <person name="Hink R.L."/>
        </authorList>
    </citation>
    <scope>NUCLEOTIDE SEQUENCE [GENOMIC DNA]</scope>
    <source>
        <tissue>Blood</tissue>
    </source>
</reference>
<protein>
    <recommendedName>
        <fullName>Intercellular adhesion molecule 1</fullName>
        <shortName>ICAM-1</shortName>
    </recommendedName>
    <cdAntigenName>CD54</cdAntigenName>
</protein>
<keyword id="KW-0130">Cell adhesion</keyword>
<keyword id="KW-1015">Disulfide bond</keyword>
<keyword id="KW-0325">Glycoprotein</keyword>
<keyword id="KW-0393">Immunoglobulin domain</keyword>
<keyword id="KW-0472">Membrane</keyword>
<keyword id="KW-0597">Phosphoprotein</keyword>
<keyword id="KW-1185">Reference proteome</keyword>
<keyword id="KW-0677">Repeat</keyword>
<keyword id="KW-0732">Signal</keyword>
<keyword id="KW-0812">Transmembrane</keyword>
<keyword id="KW-1133">Transmembrane helix</keyword>
<keyword id="KW-0832">Ubl conjugation</keyword>
<accession>Q5NKV4</accession>
<proteinExistence type="inferred from homology"/>
<gene>
    <name type="primary">ICAM1</name>
</gene>